<keyword id="KW-0150">Chloroplast</keyword>
<keyword id="KW-0560">Oxidoreductase</keyword>
<keyword id="KW-0575">Peroxidase</keyword>
<keyword id="KW-0934">Plastid</keyword>
<keyword id="KW-1185">Reference proteome</keyword>
<keyword id="KW-0346">Stress response</keyword>
<keyword id="KW-0809">Transit peptide</keyword>
<sequence length="236" mass="26016">MVSMTTSSSSYGTFSTVVNSSRPNSSATFLVPSLKFSTGISNFANLSNGFSLKSPINPGFLFKSRPFTVQARAAAEKTVHDFTVKDIDGKDVALNKFKGKVMLIVNVASRCGLTSSNYSELSHLYEKYKTQGFEILAFPCNQFGFQEPGSNSEIKQFACTRFKAEFPIFDKVDVNGPSTAPIYEFLKSNAGGFLGGLIKWNFEKFLIDKKGKVVERYPPTTSPFQIEKDIQKLLAA</sequence>
<comment type="function">
    <text evidence="1">Protects cells and enzymes from oxidative damage, by catalyzing the reduction of hydrogen peroxide, lipid peroxides and organic hydroperoxide, by glutathione.</text>
</comment>
<comment type="catalytic activity">
    <reaction evidence="2">
        <text>a hydroperoxy polyunsaturated fatty acid + 2 glutathione = a hydroxy polyunsaturated fatty acid + glutathione disulfide + H2O</text>
        <dbReference type="Rhea" id="RHEA:19057"/>
        <dbReference type="ChEBI" id="CHEBI:15377"/>
        <dbReference type="ChEBI" id="CHEBI:57925"/>
        <dbReference type="ChEBI" id="CHEBI:58297"/>
        <dbReference type="ChEBI" id="CHEBI:131871"/>
        <dbReference type="ChEBI" id="CHEBI:134019"/>
        <dbReference type="EC" id="1.11.1.12"/>
    </reaction>
</comment>
<comment type="subcellular location">
    <subcellularLocation>
        <location evidence="3">Plastid</location>
        <location evidence="3">Chloroplast</location>
    </subcellularLocation>
</comment>
<comment type="tissue specificity">
    <text evidence="5">Expressed in leaves, stems, flowers, green siliques and seeds.</text>
</comment>
<comment type="induction">
    <text evidence="5">By salt stress, osmotic stress, metals and heat treatment. Up-regulated by abscisic acid (ABA) and auxin.</text>
</comment>
<comment type="similarity">
    <text evidence="6">Belongs to the glutathione peroxidase family.</text>
</comment>
<reference key="1">
    <citation type="online journal article" date="1995" name="Plant Gene Register">
        <title>Cloning and sequencing of a glutathione peroxidase homologue from Arabidopsis thaliana.</title>
        <authorList>
            <person name="Gachotte D."/>
            <person name="Benveniste P."/>
        </authorList>
        <locator>PGR95-133</locator>
    </citation>
    <scope>NUCLEOTIDE SEQUENCE [MRNA]</scope>
    <source>
        <strain>cv. Columbia</strain>
    </source>
</reference>
<reference key="2">
    <citation type="journal article" date="1998" name="Plant J.">
        <title>Identification of cDNAS encoding plastid-targeted glutathione peroxidase.</title>
        <authorList>
            <person name="Mullineaux P.M."/>
            <person name="Karpinski S."/>
            <person name="Jimenez A."/>
            <person name="Cleary S.P."/>
            <person name="Robinson C."/>
            <person name="Creissen G.P."/>
        </authorList>
    </citation>
    <scope>NUCLEOTIDE SEQUENCE [MRNA]</scope>
    <source>
        <strain>cv. Columbia</strain>
    </source>
</reference>
<reference key="3">
    <citation type="journal article" date="1999" name="Nature">
        <title>Sequence and analysis of chromosome 2 of the plant Arabidopsis thaliana.</title>
        <authorList>
            <person name="Lin X."/>
            <person name="Kaul S."/>
            <person name="Rounsley S.D."/>
            <person name="Shea T.P."/>
            <person name="Benito M.-I."/>
            <person name="Town C.D."/>
            <person name="Fujii C.Y."/>
            <person name="Mason T.M."/>
            <person name="Bowman C.L."/>
            <person name="Barnstead M.E."/>
            <person name="Feldblyum T.V."/>
            <person name="Buell C.R."/>
            <person name="Ketchum K.A."/>
            <person name="Lee J.J."/>
            <person name="Ronning C.M."/>
            <person name="Koo H.L."/>
            <person name="Moffat K.S."/>
            <person name="Cronin L.A."/>
            <person name="Shen M."/>
            <person name="Pai G."/>
            <person name="Van Aken S."/>
            <person name="Umayam L."/>
            <person name="Tallon L.J."/>
            <person name="Gill J.E."/>
            <person name="Adams M.D."/>
            <person name="Carrera A.J."/>
            <person name="Creasy T.H."/>
            <person name="Goodman H.M."/>
            <person name="Somerville C.R."/>
            <person name="Copenhaver G.P."/>
            <person name="Preuss D."/>
            <person name="Nierman W.C."/>
            <person name="White O."/>
            <person name="Eisen J.A."/>
            <person name="Salzberg S.L."/>
            <person name="Fraser C.M."/>
            <person name="Venter J.C."/>
        </authorList>
    </citation>
    <scope>NUCLEOTIDE SEQUENCE [LARGE SCALE GENOMIC DNA]</scope>
    <source>
        <strain>cv. Columbia</strain>
    </source>
</reference>
<reference key="4">
    <citation type="journal article" date="2017" name="Plant J.">
        <title>Araport11: a complete reannotation of the Arabidopsis thaliana reference genome.</title>
        <authorList>
            <person name="Cheng C.Y."/>
            <person name="Krishnakumar V."/>
            <person name="Chan A.P."/>
            <person name="Thibaud-Nissen F."/>
            <person name="Schobel S."/>
            <person name="Town C.D."/>
        </authorList>
    </citation>
    <scope>GENOME REANNOTATION</scope>
    <source>
        <strain>cv. Columbia</strain>
    </source>
</reference>
<reference key="5">
    <citation type="journal article" date="2003" name="Science">
        <title>Empirical analysis of transcriptional activity in the Arabidopsis genome.</title>
        <authorList>
            <person name="Yamada K."/>
            <person name="Lim J."/>
            <person name="Dale J.M."/>
            <person name="Chen H."/>
            <person name="Shinn P."/>
            <person name="Palm C.J."/>
            <person name="Southwick A.M."/>
            <person name="Wu H.C."/>
            <person name="Kim C.J."/>
            <person name="Nguyen M."/>
            <person name="Pham P.K."/>
            <person name="Cheuk R.F."/>
            <person name="Karlin-Newmann G."/>
            <person name="Liu S.X."/>
            <person name="Lam B."/>
            <person name="Sakano H."/>
            <person name="Wu T."/>
            <person name="Yu G."/>
            <person name="Miranda M."/>
            <person name="Quach H.L."/>
            <person name="Tripp M."/>
            <person name="Chang C.H."/>
            <person name="Lee J.M."/>
            <person name="Toriumi M.J."/>
            <person name="Chan M.M."/>
            <person name="Tang C.C."/>
            <person name="Onodera C.S."/>
            <person name="Deng J.M."/>
            <person name="Akiyama K."/>
            <person name="Ansari Y."/>
            <person name="Arakawa T."/>
            <person name="Banh J."/>
            <person name="Banno F."/>
            <person name="Bowser L."/>
            <person name="Brooks S.Y."/>
            <person name="Carninci P."/>
            <person name="Chao Q."/>
            <person name="Choy N."/>
            <person name="Enju A."/>
            <person name="Goldsmith A.D."/>
            <person name="Gurjal M."/>
            <person name="Hansen N.F."/>
            <person name="Hayashizaki Y."/>
            <person name="Johnson-Hopson C."/>
            <person name="Hsuan V.W."/>
            <person name="Iida K."/>
            <person name="Karnes M."/>
            <person name="Khan S."/>
            <person name="Koesema E."/>
            <person name="Ishida J."/>
            <person name="Jiang P.X."/>
            <person name="Jones T."/>
            <person name="Kawai J."/>
            <person name="Kamiya A."/>
            <person name="Meyers C."/>
            <person name="Nakajima M."/>
            <person name="Narusaka M."/>
            <person name="Seki M."/>
            <person name="Sakurai T."/>
            <person name="Satou M."/>
            <person name="Tamse R."/>
            <person name="Vaysberg M."/>
            <person name="Wallender E.K."/>
            <person name="Wong C."/>
            <person name="Yamamura Y."/>
            <person name="Yuan S."/>
            <person name="Shinozaki K."/>
            <person name="Davis R.W."/>
            <person name="Theologis A."/>
            <person name="Ecker J.R."/>
        </authorList>
    </citation>
    <scope>NUCLEOTIDE SEQUENCE [LARGE SCALE MRNA]</scope>
    <source>
        <strain>cv. Columbia</strain>
    </source>
</reference>
<reference key="6">
    <citation type="journal article" date="2003" name="Plant J.">
        <title>Glutathione peroxidase genes in Arabidopsis are ubiquitous and regulated by abiotic stresses through diverse signaling pathways.</title>
        <authorList>
            <person name="Rodriguez Milla M.A."/>
            <person name="Maurer A."/>
            <person name="Rodriguez Huete A."/>
            <person name="Gustafson J.P."/>
        </authorList>
    </citation>
    <scope>GENE FAMILY</scope>
    <scope>NOMENCLATURE</scope>
    <scope>TISSUE SPECIFICITY</scope>
    <scope>INDUCTION</scope>
</reference>
<feature type="transit peptide" description="Chloroplast" evidence="3">
    <location>
        <begin position="1"/>
        <end position="64"/>
    </location>
</feature>
<feature type="chain" id="PRO_0000013086" description="Phospholipid hydroperoxide glutathione peroxidase 1, chloroplastic">
    <location>
        <begin position="65"/>
        <end position="236"/>
    </location>
</feature>
<feature type="region of interest" description="Disordered" evidence="4">
    <location>
        <begin position="1"/>
        <end position="24"/>
    </location>
</feature>
<feature type="compositionally biased region" description="Low complexity" evidence="4">
    <location>
        <begin position="1"/>
        <end position="16"/>
    </location>
</feature>
<feature type="active site" evidence="2">
    <location>
        <position position="111"/>
    </location>
</feature>
<feature type="sequence conflict" description="In Ref. 1; CAA61965." evidence="6" ref="1">
    <original>V</original>
    <variation>F</variation>
    <location>
        <position position="18"/>
    </location>
</feature>
<feature type="sequence conflict" description="In Ref. 1." evidence="6" ref="1">
    <original>A</original>
    <variation>ELKNF</variation>
    <location>
        <position position="236"/>
    </location>
</feature>
<dbReference type="EC" id="1.11.1.12"/>
<dbReference type="EMBL" id="X89866">
    <property type="protein sequence ID" value="CAA61965.1"/>
    <property type="molecule type" value="mRNA"/>
</dbReference>
<dbReference type="EMBL" id="AJ000469">
    <property type="protein sequence ID" value="CAA04112.1"/>
    <property type="molecule type" value="mRNA"/>
</dbReference>
<dbReference type="EMBL" id="CP002685">
    <property type="protein sequence ID" value="AEC07655.1"/>
    <property type="molecule type" value="Genomic_DNA"/>
</dbReference>
<dbReference type="EMBL" id="AY035153">
    <property type="protein sequence ID" value="AAK59657.1"/>
    <property type="molecule type" value="mRNA"/>
</dbReference>
<dbReference type="EMBL" id="AY063024">
    <property type="protein sequence ID" value="AAL34198.1"/>
    <property type="molecule type" value="mRNA"/>
</dbReference>
<dbReference type="PIR" id="A84644">
    <property type="entry name" value="A84644"/>
</dbReference>
<dbReference type="PIR" id="S71250">
    <property type="entry name" value="S71250"/>
</dbReference>
<dbReference type="RefSeq" id="NP_180080.1">
    <property type="nucleotide sequence ID" value="NM_128065.5"/>
</dbReference>
<dbReference type="SMR" id="P52032"/>
<dbReference type="BioGRID" id="2398">
    <property type="interactions" value="1"/>
</dbReference>
<dbReference type="FunCoup" id="P52032">
    <property type="interactions" value="2637"/>
</dbReference>
<dbReference type="STRING" id="3702.P52032"/>
<dbReference type="PeroxiBase" id="2499">
    <property type="entry name" value="AtGPx01"/>
</dbReference>
<dbReference type="iPTMnet" id="P52032"/>
<dbReference type="PaxDb" id="3702-AT2G25080.1"/>
<dbReference type="ProteomicsDB" id="220702"/>
<dbReference type="EnsemblPlants" id="AT2G25080.1">
    <property type="protein sequence ID" value="AT2G25080.1"/>
    <property type="gene ID" value="AT2G25080"/>
</dbReference>
<dbReference type="GeneID" id="817046"/>
<dbReference type="Gramene" id="AT2G25080.1">
    <property type="protein sequence ID" value="AT2G25080.1"/>
    <property type="gene ID" value="AT2G25080"/>
</dbReference>
<dbReference type="KEGG" id="ath:AT2G25080"/>
<dbReference type="Araport" id="AT2G25080"/>
<dbReference type="TAIR" id="AT2G25080">
    <property type="gene designation" value="GPX1"/>
</dbReference>
<dbReference type="eggNOG" id="KOG1651">
    <property type="taxonomic scope" value="Eukaryota"/>
</dbReference>
<dbReference type="HOGENOM" id="CLU_029507_0_0_1"/>
<dbReference type="InParanoid" id="P52032"/>
<dbReference type="OMA" id="ERYPPTI"/>
<dbReference type="PhylomeDB" id="P52032"/>
<dbReference type="BioCyc" id="ARA:AT2G25080-MONOMER"/>
<dbReference type="PRO" id="PR:P52032"/>
<dbReference type="Proteomes" id="UP000006548">
    <property type="component" value="Chromosome 2"/>
</dbReference>
<dbReference type="ExpressionAtlas" id="P52032">
    <property type="expression patterns" value="baseline and differential"/>
</dbReference>
<dbReference type="GO" id="GO:0009507">
    <property type="term" value="C:chloroplast"/>
    <property type="evidence" value="ECO:0000314"/>
    <property type="project" value="TAIR"/>
</dbReference>
<dbReference type="GO" id="GO:0009941">
    <property type="term" value="C:chloroplast envelope"/>
    <property type="evidence" value="ECO:0007005"/>
    <property type="project" value="TAIR"/>
</dbReference>
<dbReference type="GO" id="GO:0009570">
    <property type="term" value="C:chloroplast stroma"/>
    <property type="evidence" value="ECO:0007005"/>
    <property type="project" value="TAIR"/>
</dbReference>
<dbReference type="GO" id="GO:0009535">
    <property type="term" value="C:chloroplast thylakoid membrane"/>
    <property type="evidence" value="ECO:0007005"/>
    <property type="project" value="TAIR"/>
</dbReference>
<dbReference type="GO" id="GO:0005773">
    <property type="term" value="C:vacuole"/>
    <property type="evidence" value="ECO:0007005"/>
    <property type="project" value="TAIR"/>
</dbReference>
<dbReference type="GO" id="GO:0047066">
    <property type="term" value="F:phospholipid-hydroperoxide glutathione peroxidase activity"/>
    <property type="evidence" value="ECO:0007669"/>
    <property type="project" value="UniProtKB-EC"/>
</dbReference>
<dbReference type="GO" id="GO:0006979">
    <property type="term" value="P:response to oxidative stress"/>
    <property type="evidence" value="ECO:0007669"/>
    <property type="project" value="InterPro"/>
</dbReference>
<dbReference type="CDD" id="cd00340">
    <property type="entry name" value="GSH_Peroxidase"/>
    <property type="match status" value="1"/>
</dbReference>
<dbReference type="FunFam" id="3.40.30.10:FF:000025">
    <property type="entry name" value="Glutathione peroxidase"/>
    <property type="match status" value="1"/>
</dbReference>
<dbReference type="Gene3D" id="3.40.30.10">
    <property type="entry name" value="Glutaredoxin"/>
    <property type="match status" value="1"/>
</dbReference>
<dbReference type="InterPro" id="IPR000889">
    <property type="entry name" value="Glutathione_peroxidase"/>
</dbReference>
<dbReference type="InterPro" id="IPR029759">
    <property type="entry name" value="GPX_AS"/>
</dbReference>
<dbReference type="InterPro" id="IPR029760">
    <property type="entry name" value="GPX_CS"/>
</dbReference>
<dbReference type="InterPro" id="IPR036249">
    <property type="entry name" value="Thioredoxin-like_sf"/>
</dbReference>
<dbReference type="InterPro" id="IPR013766">
    <property type="entry name" value="Thioredoxin_domain"/>
</dbReference>
<dbReference type="PANTHER" id="PTHR11592">
    <property type="entry name" value="GLUTATHIONE PEROXIDASE"/>
    <property type="match status" value="1"/>
</dbReference>
<dbReference type="PANTHER" id="PTHR11592:SF99">
    <property type="entry name" value="PHOSPHOLIPID HYDROPEROXIDE GLUTATHIONE PEROXIDASE 1, CHLOROPLASTIC"/>
    <property type="match status" value="1"/>
</dbReference>
<dbReference type="Pfam" id="PF00255">
    <property type="entry name" value="GSHPx"/>
    <property type="match status" value="1"/>
</dbReference>
<dbReference type="PRINTS" id="PR01011">
    <property type="entry name" value="GLUTPROXDASE"/>
</dbReference>
<dbReference type="SUPFAM" id="SSF52833">
    <property type="entry name" value="Thioredoxin-like"/>
    <property type="match status" value="1"/>
</dbReference>
<dbReference type="PROSITE" id="PS00460">
    <property type="entry name" value="GLUTATHIONE_PEROXID_1"/>
    <property type="match status" value="1"/>
</dbReference>
<dbReference type="PROSITE" id="PS00763">
    <property type="entry name" value="GLUTATHIONE_PEROXID_2"/>
    <property type="match status" value="1"/>
</dbReference>
<dbReference type="PROSITE" id="PS51355">
    <property type="entry name" value="GLUTATHIONE_PEROXID_3"/>
    <property type="match status" value="1"/>
</dbReference>
<gene>
    <name type="primary">GPX1</name>
    <name type="ordered locus">At2g25080</name>
    <name type="ORF">F13D4.40</name>
</gene>
<protein>
    <recommendedName>
        <fullName>Phospholipid hydroperoxide glutathione peroxidase 1, chloroplastic</fullName>
        <shortName>PHGPx</shortName>
        <ecNumber>1.11.1.12</ecNumber>
    </recommendedName>
</protein>
<proteinExistence type="evidence at transcript level"/>
<evidence type="ECO:0000250" key="1">
    <source>
        <dbReference type="UniProtKB" id="O70325"/>
    </source>
</evidence>
<evidence type="ECO:0000250" key="2">
    <source>
        <dbReference type="UniProtKB" id="P36968"/>
    </source>
</evidence>
<evidence type="ECO:0000255" key="3"/>
<evidence type="ECO:0000256" key="4">
    <source>
        <dbReference type="SAM" id="MobiDB-lite"/>
    </source>
</evidence>
<evidence type="ECO:0000269" key="5">
    <source>
    </source>
</evidence>
<evidence type="ECO:0000305" key="6"/>
<name>GPX1_ARATH</name>
<organism>
    <name type="scientific">Arabidopsis thaliana</name>
    <name type="common">Mouse-ear cress</name>
    <dbReference type="NCBI Taxonomy" id="3702"/>
    <lineage>
        <taxon>Eukaryota</taxon>
        <taxon>Viridiplantae</taxon>
        <taxon>Streptophyta</taxon>
        <taxon>Embryophyta</taxon>
        <taxon>Tracheophyta</taxon>
        <taxon>Spermatophyta</taxon>
        <taxon>Magnoliopsida</taxon>
        <taxon>eudicotyledons</taxon>
        <taxon>Gunneridae</taxon>
        <taxon>Pentapetalae</taxon>
        <taxon>rosids</taxon>
        <taxon>malvids</taxon>
        <taxon>Brassicales</taxon>
        <taxon>Brassicaceae</taxon>
        <taxon>Camelineae</taxon>
        <taxon>Arabidopsis</taxon>
    </lineage>
</organism>
<accession>P52032</accession>
<accession>O19985</accession>
<accession>O81717</accession>